<dbReference type="EC" id="6.3.4.20" evidence="1"/>
<dbReference type="EMBL" id="CP000570">
    <property type="protein sequence ID" value="ABN83313.1"/>
    <property type="molecule type" value="Genomic_DNA"/>
</dbReference>
<dbReference type="RefSeq" id="WP_004190026.1">
    <property type="nucleotide sequence ID" value="NC_009074.1"/>
</dbReference>
<dbReference type="SMR" id="A3N4E3"/>
<dbReference type="GeneID" id="93058685"/>
<dbReference type="KEGG" id="bpd:BURPS668_0161"/>
<dbReference type="HOGENOM" id="CLU_081854_0_0_4"/>
<dbReference type="UniPathway" id="UPA00391"/>
<dbReference type="GO" id="GO:0005524">
    <property type="term" value="F:ATP binding"/>
    <property type="evidence" value="ECO:0007669"/>
    <property type="project" value="UniProtKB-UniRule"/>
</dbReference>
<dbReference type="GO" id="GO:0016879">
    <property type="term" value="F:ligase activity, forming carbon-nitrogen bonds"/>
    <property type="evidence" value="ECO:0007669"/>
    <property type="project" value="UniProtKB-UniRule"/>
</dbReference>
<dbReference type="GO" id="GO:0008270">
    <property type="term" value="F:zinc ion binding"/>
    <property type="evidence" value="ECO:0007669"/>
    <property type="project" value="UniProtKB-UniRule"/>
</dbReference>
<dbReference type="GO" id="GO:0008616">
    <property type="term" value="P:queuosine biosynthetic process"/>
    <property type="evidence" value="ECO:0007669"/>
    <property type="project" value="UniProtKB-UniRule"/>
</dbReference>
<dbReference type="CDD" id="cd01995">
    <property type="entry name" value="QueC-like"/>
    <property type="match status" value="1"/>
</dbReference>
<dbReference type="Gene3D" id="3.40.50.620">
    <property type="entry name" value="HUPs"/>
    <property type="match status" value="1"/>
</dbReference>
<dbReference type="HAMAP" id="MF_01633">
    <property type="entry name" value="QueC"/>
    <property type="match status" value="1"/>
</dbReference>
<dbReference type="InterPro" id="IPR018317">
    <property type="entry name" value="QueC"/>
</dbReference>
<dbReference type="InterPro" id="IPR014729">
    <property type="entry name" value="Rossmann-like_a/b/a_fold"/>
</dbReference>
<dbReference type="NCBIfam" id="TIGR00364">
    <property type="entry name" value="7-cyano-7-deazaguanine synthase QueC"/>
    <property type="match status" value="1"/>
</dbReference>
<dbReference type="PANTHER" id="PTHR42914">
    <property type="entry name" value="7-CYANO-7-DEAZAGUANINE SYNTHASE"/>
    <property type="match status" value="1"/>
</dbReference>
<dbReference type="PANTHER" id="PTHR42914:SF1">
    <property type="entry name" value="7-CYANO-7-DEAZAGUANINE SYNTHASE"/>
    <property type="match status" value="1"/>
</dbReference>
<dbReference type="Pfam" id="PF06508">
    <property type="entry name" value="QueC"/>
    <property type="match status" value="1"/>
</dbReference>
<dbReference type="PIRSF" id="PIRSF006293">
    <property type="entry name" value="ExsB"/>
    <property type="match status" value="1"/>
</dbReference>
<dbReference type="SUPFAM" id="SSF52402">
    <property type="entry name" value="Adenine nucleotide alpha hydrolases-like"/>
    <property type="match status" value="1"/>
</dbReference>
<gene>
    <name evidence="1" type="primary">queC</name>
    <name type="ordered locus">BURPS668_0161</name>
</gene>
<proteinExistence type="inferred from homology"/>
<accession>A3N4E3</accession>
<comment type="function">
    <text evidence="1">Catalyzes the ATP-dependent conversion of 7-carboxy-7-deazaguanine (CDG) to 7-cyano-7-deazaguanine (preQ(0)).</text>
</comment>
<comment type="catalytic activity">
    <reaction evidence="1">
        <text>7-carboxy-7-deazaguanine + NH4(+) + ATP = 7-cyano-7-deazaguanine + ADP + phosphate + H2O + H(+)</text>
        <dbReference type="Rhea" id="RHEA:27982"/>
        <dbReference type="ChEBI" id="CHEBI:15377"/>
        <dbReference type="ChEBI" id="CHEBI:15378"/>
        <dbReference type="ChEBI" id="CHEBI:28938"/>
        <dbReference type="ChEBI" id="CHEBI:30616"/>
        <dbReference type="ChEBI" id="CHEBI:43474"/>
        <dbReference type="ChEBI" id="CHEBI:45075"/>
        <dbReference type="ChEBI" id="CHEBI:61036"/>
        <dbReference type="ChEBI" id="CHEBI:456216"/>
        <dbReference type="EC" id="6.3.4.20"/>
    </reaction>
</comment>
<comment type="cofactor">
    <cofactor evidence="1">
        <name>Zn(2+)</name>
        <dbReference type="ChEBI" id="CHEBI:29105"/>
    </cofactor>
    <text evidence="1">Binds 1 zinc ion per subunit.</text>
</comment>
<comment type="pathway">
    <text evidence="1">Purine metabolism; 7-cyano-7-deazaguanine biosynthesis.</text>
</comment>
<comment type="similarity">
    <text evidence="1">Belongs to the QueC family.</text>
</comment>
<name>QUEC_BURP6</name>
<reference key="1">
    <citation type="journal article" date="2010" name="Genome Biol. Evol.">
        <title>Continuing evolution of Burkholderia mallei through genome reduction and large-scale rearrangements.</title>
        <authorList>
            <person name="Losada L."/>
            <person name="Ronning C.M."/>
            <person name="DeShazer D."/>
            <person name="Woods D."/>
            <person name="Fedorova N."/>
            <person name="Kim H.S."/>
            <person name="Shabalina S.A."/>
            <person name="Pearson T.R."/>
            <person name="Brinkac L."/>
            <person name="Tan P."/>
            <person name="Nandi T."/>
            <person name="Crabtree J."/>
            <person name="Badger J."/>
            <person name="Beckstrom-Sternberg S."/>
            <person name="Saqib M."/>
            <person name="Schutzer S.E."/>
            <person name="Keim P."/>
            <person name="Nierman W.C."/>
        </authorList>
    </citation>
    <scope>NUCLEOTIDE SEQUENCE [LARGE SCALE GENOMIC DNA]</scope>
    <source>
        <strain>668</strain>
    </source>
</reference>
<sequence length="244" mass="27142">MIRTDAKDGALVLFSGGQDSATCVAWALERYQTVETLGFDYGQRHRVELECREGVRDALKRRFPQWSHKLGDDHLIDLSVLGSISDTAMTRAIEIETASNGLPNTFVPGRNLLFMTIAAAIAYRRGLRALVGGMCETDFSGYPDCRDDTMKALQVALNLGMDTRFVLETPLMWLDKADTWRLAEQLGGAPLVELIRVETHTCYVGERSELHDWGFGCGECPACKLRKRGYDAYLRGESVTEAPA</sequence>
<keyword id="KW-0067">ATP-binding</keyword>
<keyword id="KW-0436">Ligase</keyword>
<keyword id="KW-0479">Metal-binding</keyword>
<keyword id="KW-0547">Nucleotide-binding</keyword>
<keyword id="KW-0671">Queuosine biosynthesis</keyword>
<keyword id="KW-0862">Zinc</keyword>
<feature type="chain" id="PRO_1000069758" description="7-cyano-7-deazaguanine synthase">
    <location>
        <begin position="1"/>
        <end position="244"/>
    </location>
</feature>
<feature type="binding site" evidence="1">
    <location>
        <begin position="14"/>
        <end position="24"/>
    </location>
    <ligand>
        <name>ATP</name>
        <dbReference type="ChEBI" id="CHEBI:30616"/>
    </ligand>
</feature>
<feature type="binding site" evidence="1">
    <location>
        <position position="202"/>
    </location>
    <ligand>
        <name>Zn(2+)</name>
        <dbReference type="ChEBI" id="CHEBI:29105"/>
    </ligand>
</feature>
<feature type="binding site" evidence="1">
    <location>
        <position position="217"/>
    </location>
    <ligand>
        <name>Zn(2+)</name>
        <dbReference type="ChEBI" id="CHEBI:29105"/>
    </ligand>
</feature>
<feature type="binding site" evidence="1">
    <location>
        <position position="220"/>
    </location>
    <ligand>
        <name>Zn(2+)</name>
        <dbReference type="ChEBI" id="CHEBI:29105"/>
    </ligand>
</feature>
<feature type="binding site" evidence="1">
    <location>
        <position position="223"/>
    </location>
    <ligand>
        <name>Zn(2+)</name>
        <dbReference type="ChEBI" id="CHEBI:29105"/>
    </ligand>
</feature>
<evidence type="ECO:0000255" key="1">
    <source>
        <dbReference type="HAMAP-Rule" id="MF_01633"/>
    </source>
</evidence>
<protein>
    <recommendedName>
        <fullName evidence="1">7-cyano-7-deazaguanine synthase</fullName>
        <ecNumber evidence="1">6.3.4.20</ecNumber>
    </recommendedName>
    <alternativeName>
        <fullName evidence="1">7-cyano-7-carbaguanine synthase</fullName>
    </alternativeName>
    <alternativeName>
        <fullName evidence="1">PreQ(0) synthase</fullName>
    </alternativeName>
    <alternativeName>
        <fullName evidence="1">Queuosine biosynthesis protein QueC</fullName>
    </alternativeName>
</protein>
<organism>
    <name type="scientific">Burkholderia pseudomallei (strain 668)</name>
    <dbReference type="NCBI Taxonomy" id="320373"/>
    <lineage>
        <taxon>Bacteria</taxon>
        <taxon>Pseudomonadati</taxon>
        <taxon>Pseudomonadota</taxon>
        <taxon>Betaproteobacteria</taxon>
        <taxon>Burkholderiales</taxon>
        <taxon>Burkholderiaceae</taxon>
        <taxon>Burkholderia</taxon>
        <taxon>pseudomallei group</taxon>
    </lineage>
</organism>